<reference evidence="3 4" key="1">
    <citation type="journal article" date="2004" name="Planta">
        <title>An auxin-inducible gene from loblolly pine (Pinus taeda L.) is differentially expressed in mature and juvenile-phase shoots and encodes a putative transmembrane protein.</title>
        <authorList>
            <person name="Busov V.B."/>
            <person name="Johannes E."/>
            <person name="Whetten R.W."/>
            <person name="Sederoff R.R."/>
            <person name="Spiker S.L."/>
            <person name="Lanz-Garcia C."/>
            <person name="Goldfarb B."/>
        </authorList>
    </citation>
    <scope>NUCLEOTIDE SEQUENCE [MRNA]</scope>
    <scope>SUBCELLULAR LOCATION</scope>
    <scope>INDUCTION</scope>
    <source>
        <tissue evidence="4">Shoot</tissue>
    </source>
</reference>
<evidence type="ECO:0000255" key="1"/>
<evidence type="ECO:0000269" key="2">
    <source>
    </source>
</evidence>
<evidence type="ECO:0000305" key="3"/>
<evidence type="ECO:0000312" key="4">
    <source>
        <dbReference type="EMBL" id="AAT37621.1"/>
    </source>
</evidence>
<keyword id="KW-0325">Glycoprotein</keyword>
<keyword id="KW-0472">Membrane</keyword>
<keyword id="KW-0812">Transmembrane</keyword>
<keyword id="KW-1133">Transmembrane helix</keyword>
<sequence length="410" mass="44975">MASNIMQRCNVFMSERVKLHAAMLALQFGYAGFHIVSRAALNMGVSKVVFPVYRNILALMLIGPCAYFLEKKERPALTLSFLIQFFLLALCGITGQSRILSLRIVLHIPTFASAIQNSVPAITFIMAAALRLEKVHISRRDGLAKIIGTVACVSGATIITLYKGPPITHIWRPNLEVTASYFKAFQGNDLSAKSENWTLGCIYLLGNCLAWSGWIVLQAPVLKRYPARLSVTSFTCFFGVIQFLIIAAFFETDLEHWKIHSGGELFTILYAGFVASGIAFSVQIWCIDRGGPVFVAVYQPVQTIAVAIMASIILGEQFYLGGIFGAILIIIGLYLVLWGKSEEKRLGLLQAKSSMVPENQPDNMDQSATLIINSSNGIKPNTSSSLTQPLLLDTSYKTVNIPSPSDEPQP</sequence>
<feature type="chain" id="PRO_0000235823" description="Auxin-induced protein 5NG4">
    <location>
        <begin position="1"/>
        <end position="410"/>
    </location>
</feature>
<feature type="topological domain" description="Cytoplasmic" evidence="1">
    <location>
        <begin position="1"/>
        <end position="16"/>
    </location>
</feature>
<feature type="transmembrane region" description="Helical" evidence="1">
    <location>
        <begin position="17"/>
        <end position="37"/>
    </location>
</feature>
<feature type="topological domain" description="Extracellular" evidence="1">
    <location>
        <begin position="38"/>
        <end position="47"/>
    </location>
</feature>
<feature type="transmembrane region" description="Helical" evidence="1">
    <location>
        <begin position="48"/>
        <end position="68"/>
    </location>
</feature>
<feature type="topological domain" description="Cytoplasmic" evidence="1">
    <location>
        <begin position="69"/>
        <end position="74"/>
    </location>
</feature>
<feature type="transmembrane region" description="Helical" evidence="1">
    <location>
        <begin position="75"/>
        <end position="95"/>
    </location>
</feature>
<feature type="topological domain" description="Extracellular" evidence="1">
    <location>
        <begin position="96"/>
        <end position="109"/>
    </location>
</feature>
<feature type="transmembrane region" description="Helical" evidence="1">
    <location>
        <begin position="110"/>
        <end position="130"/>
    </location>
</feature>
<feature type="topological domain" description="Cytoplasmic" evidence="1">
    <location>
        <begin position="131"/>
        <end position="141"/>
    </location>
</feature>
<feature type="transmembrane region" description="Helical" evidence="1">
    <location>
        <begin position="142"/>
        <end position="162"/>
    </location>
</feature>
<feature type="topological domain" description="Extracellular" evidence="1">
    <location>
        <begin position="163"/>
        <end position="196"/>
    </location>
</feature>
<feature type="transmembrane region" description="Helical" evidence="1">
    <location>
        <begin position="197"/>
        <end position="217"/>
    </location>
</feature>
<feature type="topological domain" description="Cytoplasmic" evidence="1">
    <location>
        <begin position="218"/>
        <end position="229"/>
    </location>
</feature>
<feature type="transmembrane region" description="Helical" evidence="1">
    <location>
        <begin position="230"/>
        <end position="250"/>
    </location>
</feature>
<feature type="topological domain" description="Extracellular" evidence="1">
    <location>
        <begin position="251"/>
        <end position="264"/>
    </location>
</feature>
<feature type="transmembrane region" description="Helical" evidence="1">
    <location>
        <begin position="265"/>
        <end position="285"/>
    </location>
</feature>
<feature type="topological domain" description="Cytoplasmic" evidence="1">
    <location>
        <begin position="286"/>
        <end position="292"/>
    </location>
</feature>
<feature type="transmembrane region" description="Helical" evidence="1">
    <location>
        <begin position="293"/>
        <end position="313"/>
    </location>
</feature>
<feature type="topological domain" description="Extracellular" evidence="1">
    <location>
        <begin position="314"/>
        <end position="317"/>
    </location>
</feature>
<feature type="transmembrane region" description="Helical" evidence="1">
    <location>
        <begin position="318"/>
        <end position="338"/>
    </location>
</feature>
<feature type="topological domain" description="Cytoplasmic" evidence="1">
    <location>
        <begin position="339"/>
        <end position="410"/>
    </location>
</feature>
<feature type="domain" description="EamA">
    <location>
        <begin position="209"/>
        <end position="338"/>
    </location>
</feature>
<feature type="glycosylation site" description="N-linked (GlcNAc...) asparagine" evidence="1">
    <location>
        <position position="196"/>
    </location>
</feature>
<protein>
    <recommendedName>
        <fullName>Auxin-induced protein 5NG4</fullName>
    </recommendedName>
</protein>
<organism>
    <name type="scientific">Pinus taeda</name>
    <name type="common">Loblolly pine</name>
    <dbReference type="NCBI Taxonomy" id="3352"/>
    <lineage>
        <taxon>Eukaryota</taxon>
        <taxon>Viridiplantae</taxon>
        <taxon>Streptophyta</taxon>
        <taxon>Embryophyta</taxon>
        <taxon>Tracheophyta</taxon>
        <taxon>Spermatophyta</taxon>
        <taxon>Pinopsida</taxon>
        <taxon>Pinidae</taxon>
        <taxon>Conifers I</taxon>
        <taxon>Pinales</taxon>
        <taxon>Pinaceae</taxon>
        <taxon>Pinus</taxon>
        <taxon>Pinus subgen. Pinus</taxon>
    </lineage>
</organism>
<accession>Q6J163</accession>
<comment type="subcellular location">
    <subcellularLocation>
        <location evidence="3">Membrane</location>
        <topology evidence="3">Multi-pass membrane protein</topology>
    </subcellularLocation>
    <text evidence="2">Detected in the periphery of cells and punctate structures throughout cytoplasm.</text>
</comment>
<comment type="induction">
    <text evidence="2">By auxin in hypocotyls, root and stems but not in cotyledons and needles. To a greater degree in juvenile than mature shoots.</text>
</comment>
<comment type="similarity">
    <text evidence="3">Belongs to the drug/metabolite transporter (DMT) superfamily. Plant drug/metabolite exporter (P-DME) (TC 2.A.7.4) family.</text>
</comment>
<dbReference type="EMBL" id="AY608411">
    <property type="protein sequence ID" value="AAT37621.1"/>
    <property type="molecule type" value="mRNA"/>
</dbReference>
<dbReference type="GO" id="GO:0005938">
    <property type="term" value="C:cell cortex"/>
    <property type="evidence" value="ECO:0000314"/>
    <property type="project" value="UniProtKB"/>
</dbReference>
<dbReference type="GO" id="GO:0005737">
    <property type="term" value="C:cytoplasm"/>
    <property type="evidence" value="ECO:0000314"/>
    <property type="project" value="UniProtKB"/>
</dbReference>
<dbReference type="GO" id="GO:0005886">
    <property type="term" value="C:plasma membrane"/>
    <property type="evidence" value="ECO:0000303"/>
    <property type="project" value="UniProtKB"/>
</dbReference>
<dbReference type="GO" id="GO:0022857">
    <property type="term" value="F:transmembrane transporter activity"/>
    <property type="evidence" value="ECO:0007669"/>
    <property type="project" value="InterPro"/>
</dbReference>
<dbReference type="GO" id="GO:0009734">
    <property type="term" value="P:auxin-activated signaling pathway"/>
    <property type="evidence" value="ECO:0000314"/>
    <property type="project" value="UniProtKB"/>
</dbReference>
<dbReference type="InterPro" id="IPR000620">
    <property type="entry name" value="EamA_dom"/>
</dbReference>
<dbReference type="InterPro" id="IPR030184">
    <property type="entry name" value="WAT1-related"/>
</dbReference>
<dbReference type="PANTHER" id="PTHR31218">
    <property type="entry name" value="WAT1-RELATED PROTEIN"/>
    <property type="match status" value="1"/>
</dbReference>
<dbReference type="Pfam" id="PF00892">
    <property type="entry name" value="EamA"/>
    <property type="match status" value="1"/>
</dbReference>
<dbReference type="SUPFAM" id="SSF103481">
    <property type="entry name" value="Multidrug resistance efflux transporter EmrE"/>
    <property type="match status" value="1"/>
</dbReference>
<name>5NG4_PINTA</name>
<proteinExistence type="evidence at transcript level"/>